<keyword id="KW-0067">ATP-binding</keyword>
<keyword id="KW-0227">DNA damage</keyword>
<keyword id="KW-0234">DNA repair</keyword>
<keyword id="KW-0238">DNA-binding</keyword>
<keyword id="KW-0547">Nucleotide-binding</keyword>
<keyword id="KW-1185">Reference proteome</keyword>
<dbReference type="EMBL" id="AE016830">
    <property type="protein sequence ID" value="AAO82841.1"/>
    <property type="molecule type" value="Genomic_DNA"/>
</dbReference>
<dbReference type="RefSeq" id="NP_816771.1">
    <property type="nucleotide sequence ID" value="NC_004668.1"/>
</dbReference>
<dbReference type="RefSeq" id="WP_002378992.1">
    <property type="nucleotide sequence ID" value="NZ_KE136524.1"/>
</dbReference>
<dbReference type="SMR" id="Q82ZA2"/>
<dbReference type="STRING" id="226185.EF_3167"/>
<dbReference type="EnsemblBacteria" id="AAO82841">
    <property type="protein sequence ID" value="AAO82841"/>
    <property type="gene ID" value="EF_3167"/>
</dbReference>
<dbReference type="KEGG" id="efa:EF3167"/>
<dbReference type="PATRIC" id="fig|226185.45.peg.411"/>
<dbReference type="eggNOG" id="COG0249">
    <property type="taxonomic scope" value="Bacteria"/>
</dbReference>
<dbReference type="HOGENOM" id="CLU_002472_3_1_9"/>
<dbReference type="Proteomes" id="UP000001415">
    <property type="component" value="Chromosome"/>
</dbReference>
<dbReference type="GO" id="GO:0005829">
    <property type="term" value="C:cytosol"/>
    <property type="evidence" value="ECO:0007669"/>
    <property type="project" value="TreeGrafter"/>
</dbReference>
<dbReference type="GO" id="GO:0005524">
    <property type="term" value="F:ATP binding"/>
    <property type="evidence" value="ECO:0007669"/>
    <property type="project" value="UniProtKB-UniRule"/>
</dbReference>
<dbReference type="GO" id="GO:0140664">
    <property type="term" value="F:ATP-dependent DNA damage sensor activity"/>
    <property type="evidence" value="ECO:0007669"/>
    <property type="project" value="InterPro"/>
</dbReference>
<dbReference type="GO" id="GO:0003684">
    <property type="term" value="F:damaged DNA binding"/>
    <property type="evidence" value="ECO:0007669"/>
    <property type="project" value="UniProtKB-UniRule"/>
</dbReference>
<dbReference type="GO" id="GO:0030983">
    <property type="term" value="F:mismatched DNA binding"/>
    <property type="evidence" value="ECO:0007669"/>
    <property type="project" value="InterPro"/>
</dbReference>
<dbReference type="GO" id="GO:0006298">
    <property type="term" value="P:mismatch repair"/>
    <property type="evidence" value="ECO:0007669"/>
    <property type="project" value="UniProtKB-UniRule"/>
</dbReference>
<dbReference type="CDD" id="cd03284">
    <property type="entry name" value="ABC_MutS1"/>
    <property type="match status" value="1"/>
</dbReference>
<dbReference type="FunFam" id="1.10.1420.10:FF:000007">
    <property type="entry name" value="DNA mismatch repair protein MutS"/>
    <property type="match status" value="1"/>
</dbReference>
<dbReference type="FunFam" id="3.40.1170.10:FF:000001">
    <property type="entry name" value="DNA mismatch repair protein MutS"/>
    <property type="match status" value="1"/>
</dbReference>
<dbReference type="FunFam" id="3.40.50.300:FF:000896">
    <property type="entry name" value="DNA mismatch repair protein MutS"/>
    <property type="match status" value="1"/>
</dbReference>
<dbReference type="Gene3D" id="1.10.1420.10">
    <property type="match status" value="2"/>
</dbReference>
<dbReference type="Gene3D" id="3.40.1170.10">
    <property type="entry name" value="DNA repair protein MutS, domain I"/>
    <property type="match status" value="1"/>
</dbReference>
<dbReference type="Gene3D" id="3.30.420.110">
    <property type="entry name" value="MutS, connector domain"/>
    <property type="match status" value="1"/>
</dbReference>
<dbReference type="Gene3D" id="3.40.50.300">
    <property type="entry name" value="P-loop containing nucleotide triphosphate hydrolases"/>
    <property type="match status" value="1"/>
</dbReference>
<dbReference type="HAMAP" id="MF_00096">
    <property type="entry name" value="MutS"/>
    <property type="match status" value="1"/>
</dbReference>
<dbReference type="InterPro" id="IPR005748">
    <property type="entry name" value="DNA_mismatch_repair_MutS"/>
</dbReference>
<dbReference type="InterPro" id="IPR007695">
    <property type="entry name" value="DNA_mismatch_repair_MutS-lik_N"/>
</dbReference>
<dbReference type="InterPro" id="IPR017261">
    <property type="entry name" value="DNA_mismatch_repair_MutS/MSH"/>
</dbReference>
<dbReference type="InterPro" id="IPR000432">
    <property type="entry name" value="DNA_mismatch_repair_MutS_C"/>
</dbReference>
<dbReference type="InterPro" id="IPR007861">
    <property type="entry name" value="DNA_mismatch_repair_MutS_clamp"/>
</dbReference>
<dbReference type="InterPro" id="IPR007696">
    <property type="entry name" value="DNA_mismatch_repair_MutS_core"/>
</dbReference>
<dbReference type="InterPro" id="IPR016151">
    <property type="entry name" value="DNA_mismatch_repair_MutS_N"/>
</dbReference>
<dbReference type="InterPro" id="IPR036187">
    <property type="entry name" value="DNA_mismatch_repair_MutS_sf"/>
</dbReference>
<dbReference type="InterPro" id="IPR007860">
    <property type="entry name" value="DNA_mmatch_repair_MutS_con_dom"/>
</dbReference>
<dbReference type="InterPro" id="IPR045076">
    <property type="entry name" value="MutS"/>
</dbReference>
<dbReference type="InterPro" id="IPR036678">
    <property type="entry name" value="MutS_con_dom_sf"/>
</dbReference>
<dbReference type="InterPro" id="IPR027417">
    <property type="entry name" value="P-loop_NTPase"/>
</dbReference>
<dbReference type="NCBIfam" id="TIGR01070">
    <property type="entry name" value="mutS1"/>
    <property type="match status" value="1"/>
</dbReference>
<dbReference type="NCBIfam" id="NF003810">
    <property type="entry name" value="PRK05399.1"/>
    <property type="match status" value="1"/>
</dbReference>
<dbReference type="PANTHER" id="PTHR11361:SF34">
    <property type="entry name" value="DNA MISMATCH REPAIR PROTEIN MSH1, MITOCHONDRIAL"/>
    <property type="match status" value="1"/>
</dbReference>
<dbReference type="PANTHER" id="PTHR11361">
    <property type="entry name" value="DNA MISMATCH REPAIR PROTEIN MUTS FAMILY MEMBER"/>
    <property type="match status" value="1"/>
</dbReference>
<dbReference type="Pfam" id="PF01624">
    <property type="entry name" value="MutS_I"/>
    <property type="match status" value="1"/>
</dbReference>
<dbReference type="Pfam" id="PF05188">
    <property type="entry name" value="MutS_II"/>
    <property type="match status" value="1"/>
</dbReference>
<dbReference type="Pfam" id="PF05192">
    <property type="entry name" value="MutS_III"/>
    <property type="match status" value="1"/>
</dbReference>
<dbReference type="Pfam" id="PF05190">
    <property type="entry name" value="MutS_IV"/>
    <property type="match status" value="1"/>
</dbReference>
<dbReference type="Pfam" id="PF00488">
    <property type="entry name" value="MutS_V"/>
    <property type="match status" value="1"/>
</dbReference>
<dbReference type="PIRSF" id="PIRSF037677">
    <property type="entry name" value="DNA_mis_repair_Msh6"/>
    <property type="match status" value="1"/>
</dbReference>
<dbReference type="SMART" id="SM00534">
    <property type="entry name" value="MUTSac"/>
    <property type="match status" value="1"/>
</dbReference>
<dbReference type="SMART" id="SM00533">
    <property type="entry name" value="MUTSd"/>
    <property type="match status" value="1"/>
</dbReference>
<dbReference type="SUPFAM" id="SSF55271">
    <property type="entry name" value="DNA repair protein MutS, domain I"/>
    <property type="match status" value="1"/>
</dbReference>
<dbReference type="SUPFAM" id="SSF53150">
    <property type="entry name" value="DNA repair protein MutS, domain II"/>
    <property type="match status" value="1"/>
</dbReference>
<dbReference type="SUPFAM" id="SSF48334">
    <property type="entry name" value="DNA repair protein MutS, domain III"/>
    <property type="match status" value="1"/>
</dbReference>
<dbReference type="SUPFAM" id="SSF52540">
    <property type="entry name" value="P-loop containing nucleoside triphosphate hydrolases"/>
    <property type="match status" value="1"/>
</dbReference>
<dbReference type="PROSITE" id="PS00486">
    <property type="entry name" value="DNA_MISMATCH_REPAIR_2"/>
    <property type="match status" value="1"/>
</dbReference>
<organism>
    <name type="scientific">Enterococcus faecalis (strain ATCC 700802 / V583)</name>
    <dbReference type="NCBI Taxonomy" id="226185"/>
    <lineage>
        <taxon>Bacteria</taxon>
        <taxon>Bacillati</taxon>
        <taxon>Bacillota</taxon>
        <taxon>Bacilli</taxon>
        <taxon>Lactobacillales</taxon>
        <taxon>Enterococcaceae</taxon>
        <taxon>Enterococcus</taxon>
    </lineage>
</organism>
<protein>
    <recommendedName>
        <fullName evidence="1">DNA mismatch repair protein MutS</fullName>
    </recommendedName>
</protein>
<comment type="function">
    <text evidence="1">This protein is involved in the repair of mismatches in DNA. It is possible that it carries out the mismatch recognition step. This protein has a weak ATPase activity.</text>
</comment>
<comment type="similarity">
    <text evidence="1">Belongs to the DNA mismatch repair MutS family.</text>
</comment>
<name>MUTS_ENTFA</name>
<proteinExistence type="inferred from homology"/>
<reference key="1">
    <citation type="journal article" date="2003" name="Science">
        <title>Role of mobile DNA in the evolution of vancomycin-resistant Enterococcus faecalis.</title>
        <authorList>
            <person name="Paulsen I.T."/>
            <person name="Banerjei L."/>
            <person name="Myers G.S.A."/>
            <person name="Nelson K.E."/>
            <person name="Seshadri R."/>
            <person name="Read T.D."/>
            <person name="Fouts D.E."/>
            <person name="Eisen J.A."/>
            <person name="Gill S.R."/>
            <person name="Heidelberg J.F."/>
            <person name="Tettelin H."/>
            <person name="Dodson R.J."/>
            <person name="Umayam L.A."/>
            <person name="Brinkac L.M."/>
            <person name="Beanan M.J."/>
            <person name="Daugherty S.C."/>
            <person name="DeBoy R.T."/>
            <person name="Durkin S.A."/>
            <person name="Kolonay J.F."/>
            <person name="Madupu R."/>
            <person name="Nelson W.C."/>
            <person name="Vamathevan J.J."/>
            <person name="Tran B."/>
            <person name="Upton J."/>
            <person name="Hansen T."/>
            <person name="Shetty J."/>
            <person name="Khouri H.M."/>
            <person name="Utterback T.R."/>
            <person name="Radune D."/>
            <person name="Ketchum K.A."/>
            <person name="Dougherty B.A."/>
            <person name="Fraser C.M."/>
        </authorList>
    </citation>
    <scope>NUCLEOTIDE SEQUENCE [LARGE SCALE GENOMIC DNA]</scope>
    <source>
        <strain>ATCC 700802 / V583</strain>
    </source>
</reference>
<gene>
    <name evidence="1" type="primary">mutS</name>
    <name type="synonym">hexA</name>
    <name type="ordered locus">EF_3167</name>
</gene>
<evidence type="ECO:0000255" key="1">
    <source>
        <dbReference type="HAMAP-Rule" id="MF_00096"/>
    </source>
</evidence>
<sequence length="858" mass="96877">MPQKTKNTPMMEQYLSIKAQYKDAFLFYRLGDFYELFYEDAINAAQILELTLTSRNRNADDPIPMCGVPYHAAQGYIDTLIEQGYKVAICEQVEDPKTTKGMVKREVVQLVTPGTVMNSKGLEAKDNNYLTAVLTDGNQFGFAYVDLSTGELKTAVLADEEGVLNEASALQTKEMVLGSGIPESLKENLSLRLNIIFSTQETVEENAEFSFLTNELINPLEIEITGKLLSYLSVTQKRSLSHIQKAVEYQPDHFLKMDHYSKFNLELSQSIRTGQKKGTLLWLLDETKTAMGGRLLKQWLDRPLIQERQIKARQEMVQSLLNAYFERLDLQAALTNVYDLERLAGRVAFGSVNGRDLIQLRTSLEQVPTIRQLIVGINQGEWDDLLVDLNPVEDLVALIATAINEEAPLQITEGKVIKDGYNDQLDEYRDAMRNGKQWLAELEAKERQETGIKNLKIGYNRVFGYFIEITKSNLANLEEGKYERKQTLANAERFITPELKELERLILEAEEKSVELEYQLFLAVREQVKTNIDRLQTLAKTISAVDVLQSFATISERYQYVRPTLRSNTKNLAIVEGRHPVVEKVLGHQEYIPNSIRMNPETDILLITGPNMSGKSTYMRQLALTVVMAQIGCFVPAESAEMPIFDQIFTRIGASDDLIAGQSTFMVEMMEANQALRHATPNSLILFDELGRGTATYDGMALAQAIIEYIHREVQAKTLFSTHYHELTVLDETLKGLKNIHVGAVEKDGEVVFLHKMMEGPADKSYGIHVAKIAGLPSPLLERAATILSALEAEETTIPISVHHEEVSEVHEETEQLSLFKEVSTEELSVIDTLKKMNLLEMTPLDALNMLHQLQKRI</sequence>
<accession>Q82ZA2</accession>
<feature type="chain" id="PRO_0000115097" description="DNA mismatch repair protein MutS">
    <location>
        <begin position="1"/>
        <end position="858"/>
    </location>
</feature>
<feature type="binding site" evidence="1">
    <location>
        <begin position="609"/>
        <end position="616"/>
    </location>
    <ligand>
        <name>ATP</name>
        <dbReference type="ChEBI" id="CHEBI:30616"/>
    </ligand>
</feature>